<accession>P56721</accession>
<accession>Q8MS49</accession>
<accession>Q9V758</accession>
<protein>
    <recommendedName>
        <fullName>Transcription factor collier</fullName>
    </recommendedName>
    <alternativeName>
        <fullName>Transcription factor knot</fullName>
    </alternativeName>
</protein>
<keyword id="KW-0025">Alternative splicing</keyword>
<keyword id="KW-0217">Developmental protein</keyword>
<keyword id="KW-0238">DNA-binding</keyword>
<keyword id="KW-0479">Metal-binding</keyword>
<keyword id="KW-0539">Nucleus</keyword>
<keyword id="KW-1185">Reference proteome</keyword>
<keyword id="KW-0804">Transcription</keyword>
<keyword id="KW-0805">Transcription regulation</keyword>
<keyword id="KW-0862">Zinc</keyword>
<keyword id="KW-0863">Zinc-finger</keyword>
<proteinExistence type="evidence at transcript level"/>
<comment type="function">
    <text evidence="4 5 6 7">May act as a 'second-level regulator' of head patterning. Required for establishment of the PS(-1)/PS0 parasegmental border and formation of the intercalary segment. Required for expression of the segment polarity genes hedgehog, engrailed and wingless, and the segment-identity genes CAP and collar in the intercalary segment. Required at the onset of the gastrulation for the correct formation of the mandibular segment.</text>
</comment>
<comment type="subcellular location">
    <subcellularLocation>
        <location evidence="9">Nucleus</location>
    </subcellularLocation>
</comment>
<comment type="alternative products">
    <event type="alternative splicing"/>
    <isoform>
        <id>P56721-1</id>
        <name>COL1</name>
        <sequence type="displayed"/>
    </isoform>
    <isoform>
        <id>P56721-2</id>
        <name>COL2</name>
        <sequence type="described" ref="VSP_001111"/>
    </isoform>
</comment>
<comment type="tissue specificity">
    <text evidence="7">Its expression at the blastoderm stage is restricted to a single stripe of cells corresponding to part of the intercalary and mandibular segment primordia, possibly parasegment O.</text>
</comment>
<comment type="developmental stage">
    <text evidence="7">Isoform COL1 is expressed from 3 hours of embryogenesis, with a peak of accumulation between 8 and 16 hours post-fertilization. Expression persists at very low level in first instar larvae and accumulates again in third instar larvae and pupae. Isoform COL2 is expressed after 8 hours of embryogenesis, peaks in first instar larvae and is present at low levels in third instar larvae and pupae.</text>
</comment>
<comment type="similarity">
    <text evidence="9">Belongs to the COE family.</text>
</comment>
<reference key="1">
    <citation type="journal article" date="1996" name="Curr. Biol.">
        <title>Collier, a novel regulator of Drosophila head development, is expressed in a single mitotic domain.</title>
        <authorList>
            <person name="Crozatier M."/>
            <person name="Valle D."/>
            <person name="Dubois L."/>
            <person name="Ibnsouda S."/>
            <person name="Vincent A."/>
        </authorList>
    </citation>
    <scope>NUCLEOTIDE SEQUENCE (ISOFORMS COL1 AND COL2)</scope>
    <scope>FUNCTION</scope>
    <scope>TISSUE SPECIFICITY</scope>
    <scope>DEVELOPMENTAL STAGE</scope>
    <source>
        <tissue>Embryo</tissue>
    </source>
</reference>
<reference key="2">
    <citation type="journal article" date="2000" name="Science">
        <title>The genome sequence of Drosophila melanogaster.</title>
        <authorList>
            <person name="Adams M.D."/>
            <person name="Celniker S.E."/>
            <person name="Holt R.A."/>
            <person name="Evans C.A."/>
            <person name="Gocayne J.D."/>
            <person name="Amanatides P.G."/>
            <person name="Scherer S.E."/>
            <person name="Li P.W."/>
            <person name="Hoskins R.A."/>
            <person name="Galle R.F."/>
            <person name="George R.A."/>
            <person name="Lewis S.E."/>
            <person name="Richards S."/>
            <person name="Ashburner M."/>
            <person name="Henderson S.N."/>
            <person name="Sutton G.G."/>
            <person name="Wortman J.R."/>
            <person name="Yandell M.D."/>
            <person name="Zhang Q."/>
            <person name="Chen L.X."/>
            <person name="Brandon R.C."/>
            <person name="Rogers Y.-H.C."/>
            <person name="Blazej R.G."/>
            <person name="Champe M."/>
            <person name="Pfeiffer B.D."/>
            <person name="Wan K.H."/>
            <person name="Doyle C."/>
            <person name="Baxter E.G."/>
            <person name="Helt G."/>
            <person name="Nelson C.R."/>
            <person name="Miklos G.L.G."/>
            <person name="Abril J.F."/>
            <person name="Agbayani A."/>
            <person name="An H.-J."/>
            <person name="Andrews-Pfannkoch C."/>
            <person name="Baldwin D."/>
            <person name="Ballew R.M."/>
            <person name="Basu A."/>
            <person name="Baxendale J."/>
            <person name="Bayraktaroglu L."/>
            <person name="Beasley E.M."/>
            <person name="Beeson K.Y."/>
            <person name="Benos P.V."/>
            <person name="Berman B.P."/>
            <person name="Bhandari D."/>
            <person name="Bolshakov S."/>
            <person name="Borkova D."/>
            <person name="Botchan M.R."/>
            <person name="Bouck J."/>
            <person name="Brokstein P."/>
            <person name="Brottier P."/>
            <person name="Burtis K.C."/>
            <person name="Busam D.A."/>
            <person name="Butler H."/>
            <person name="Cadieu E."/>
            <person name="Center A."/>
            <person name="Chandra I."/>
            <person name="Cherry J.M."/>
            <person name="Cawley S."/>
            <person name="Dahlke C."/>
            <person name="Davenport L.B."/>
            <person name="Davies P."/>
            <person name="de Pablos B."/>
            <person name="Delcher A."/>
            <person name="Deng Z."/>
            <person name="Mays A.D."/>
            <person name="Dew I."/>
            <person name="Dietz S.M."/>
            <person name="Dodson K."/>
            <person name="Doup L.E."/>
            <person name="Downes M."/>
            <person name="Dugan-Rocha S."/>
            <person name="Dunkov B.C."/>
            <person name="Dunn P."/>
            <person name="Durbin K.J."/>
            <person name="Evangelista C.C."/>
            <person name="Ferraz C."/>
            <person name="Ferriera S."/>
            <person name="Fleischmann W."/>
            <person name="Fosler C."/>
            <person name="Gabrielian A.E."/>
            <person name="Garg N.S."/>
            <person name="Gelbart W.M."/>
            <person name="Glasser K."/>
            <person name="Glodek A."/>
            <person name="Gong F."/>
            <person name="Gorrell J.H."/>
            <person name="Gu Z."/>
            <person name="Guan P."/>
            <person name="Harris M."/>
            <person name="Harris N.L."/>
            <person name="Harvey D.A."/>
            <person name="Heiman T.J."/>
            <person name="Hernandez J.R."/>
            <person name="Houck J."/>
            <person name="Hostin D."/>
            <person name="Houston K.A."/>
            <person name="Howland T.J."/>
            <person name="Wei M.-H."/>
            <person name="Ibegwam C."/>
            <person name="Jalali M."/>
            <person name="Kalush F."/>
            <person name="Karpen G.H."/>
            <person name="Ke Z."/>
            <person name="Kennison J.A."/>
            <person name="Ketchum K.A."/>
            <person name="Kimmel B.E."/>
            <person name="Kodira C.D."/>
            <person name="Kraft C.L."/>
            <person name="Kravitz S."/>
            <person name="Kulp D."/>
            <person name="Lai Z."/>
            <person name="Lasko P."/>
            <person name="Lei Y."/>
            <person name="Levitsky A.A."/>
            <person name="Li J.H."/>
            <person name="Li Z."/>
            <person name="Liang Y."/>
            <person name="Lin X."/>
            <person name="Liu X."/>
            <person name="Mattei B."/>
            <person name="McIntosh T.C."/>
            <person name="McLeod M.P."/>
            <person name="McPherson D."/>
            <person name="Merkulov G."/>
            <person name="Milshina N.V."/>
            <person name="Mobarry C."/>
            <person name="Morris J."/>
            <person name="Moshrefi A."/>
            <person name="Mount S.M."/>
            <person name="Moy M."/>
            <person name="Murphy B."/>
            <person name="Murphy L."/>
            <person name="Muzny D.M."/>
            <person name="Nelson D.L."/>
            <person name="Nelson D.R."/>
            <person name="Nelson K.A."/>
            <person name="Nixon K."/>
            <person name="Nusskern D.R."/>
            <person name="Pacleb J.M."/>
            <person name="Palazzolo M."/>
            <person name="Pittman G.S."/>
            <person name="Pan S."/>
            <person name="Pollard J."/>
            <person name="Puri V."/>
            <person name="Reese M.G."/>
            <person name="Reinert K."/>
            <person name="Remington K."/>
            <person name="Saunders R.D.C."/>
            <person name="Scheeler F."/>
            <person name="Shen H."/>
            <person name="Shue B.C."/>
            <person name="Siden-Kiamos I."/>
            <person name="Simpson M."/>
            <person name="Skupski M.P."/>
            <person name="Smith T.J."/>
            <person name="Spier E."/>
            <person name="Spradling A.C."/>
            <person name="Stapleton M."/>
            <person name="Strong R."/>
            <person name="Sun E."/>
            <person name="Svirskas R."/>
            <person name="Tector C."/>
            <person name="Turner R."/>
            <person name="Venter E."/>
            <person name="Wang A.H."/>
            <person name="Wang X."/>
            <person name="Wang Z.-Y."/>
            <person name="Wassarman D.A."/>
            <person name="Weinstock G.M."/>
            <person name="Weissenbach J."/>
            <person name="Williams S.M."/>
            <person name="Woodage T."/>
            <person name="Worley K.C."/>
            <person name="Wu D."/>
            <person name="Yang S."/>
            <person name="Yao Q.A."/>
            <person name="Ye J."/>
            <person name="Yeh R.-F."/>
            <person name="Zaveri J.S."/>
            <person name="Zhan M."/>
            <person name="Zhang G."/>
            <person name="Zhao Q."/>
            <person name="Zheng L."/>
            <person name="Zheng X.H."/>
            <person name="Zhong F.N."/>
            <person name="Zhong W."/>
            <person name="Zhou X."/>
            <person name="Zhu S.C."/>
            <person name="Zhu X."/>
            <person name="Smith H.O."/>
            <person name="Gibbs R.A."/>
            <person name="Myers E.W."/>
            <person name="Rubin G.M."/>
            <person name="Venter J.C."/>
        </authorList>
    </citation>
    <scope>NUCLEOTIDE SEQUENCE [LARGE SCALE GENOMIC DNA]</scope>
    <source>
        <strain>Berkeley</strain>
    </source>
</reference>
<reference key="3">
    <citation type="journal article" date="2002" name="Genome Biol.">
        <title>Annotation of the Drosophila melanogaster euchromatic genome: a systematic review.</title>
        <authorList>
            <person name="Misra S."/>
            <person name="Crosby M.A."/>
            <person name="Mungall C.J."/>
            <person name="Matthews B.B."/>
            <person name="Campbell K.S."/>
            <person name="Hradecky P."/>
            <person name="Huang Y."/>
            <person name="Kaminker J.S."/>
            <person name="Millburn G.H."/>
            <person name="Prochnik S.E."/>
            <person name="Smith C.D."/>
            <person name="Tupy J.L."/>
            <person name="Whitfield E.J."/>
            <person name="Bayraktaroglu L."/>
            <person name="Berman B.P."/>
            <person name="Bettencourt B.R."/>
            <person name="Celniker S.E."/>
            <person name="de Grey A.D.N.J."/>
            <person name="Drysdale R.A."/>
            <person name="Harris N.L."/>
            <person name="Richter J."/>
            <person name="Russo S."/>
            <person name="Schroeder A.J."/>
            <person name="Shu S.Q."/>
            <person name="Stapleton M."/>
            <person name="Yamada C."/>
            <person name="Ashburner M."/>
            <person name="Gelbart W.M."/>
            <person name="Rubin G.M."/>
            <person name="Lewis S.E."/>
        </authorList>
    </citation>
    <scope>GENOME REANNOTATION</scope>
    <source>
        <strain>Berkeley</strain>
    </source>
</reference>
<reference key="4">
    <citation type="journal article" date="2002" name="Genome Biol.">
        <title>A Drosophila full-length cDNA resource.</title>
        <authorList>
            <person name="Stapleton M."/>
            <person name="Carlson J.W."/>
            <person name="Brokstein P."/>
            <person name="Yu C."/>
            <person name="Champe M."/>
            <person name="George R.A."/>
            <person name="Guarin H."/>
            <person name="Kronmiller B."/>
            <person name="Pacleb J.M."/>
            <person name="Park S."/>
            <person name="Wan K.H."/>
            <person name="Rubin G.M."/>
            <person name="Celniker S.E."/>
        </authorList>
    </citation>
    <scope>NUCLEOTIDE SEQUENCE [LARGE SCALE MRNA] (ISOFORM COL2)</scope>
    <source>
        <strain>Berkeley</strain>
        <tissue>Embryo</tissue>
    </source>
</reference>
<reference key="5">
    <citation type="journal article" date="1999" name="Curr. Biol.">
        <title>The COE transcription factor Collier is a mediator of short-range Hedgehog-induced patterning of the Drosophila wing.</title>
        <authorList>
            <person name="Vervoort M."/>
            <person name="Crozatier M."/>
            <person name="Valle D."/>
            <person name="Vincent A."/>
        </authorList>
    </citation>
    <scope>FUNCTION</scope>
</reference>
<reference key="6">
    <citation type="journal article" date="1999" name="Development">
        <title>Requirement for the Drosophila COE transcription factor Collier in formation of an embryonic muscle: transcriptional response to notch signalling.</title>
        <authorList>
            <person name="Crozatier M."/>
            <person name="Vincent A."/>
        </authorList>
    </citation>
    <scope>FUNCTION</scope>
</reference>
<reference key="7">
    <citation type="journal article" date="1999" name="Development">
        <title>Head versus trunk patterning in the Drosophila embryo; collier requirement for formation of the intercalary segment.</title>
        <authorList>
            <person name="Crozatier M."/>
            <person name="Valle D."/>
            <person name="Dubois L."/>
            <person name="Ibnsouda S."/>
            <person name="Vincent A."/>
        </authorList>
    </citation>
    <scope>FUNCTION</scope>
</reference>
<gene>
    <name type="primary">kn</name>
    <name type="synonym">col</name>
    <name type="ORF">CG10197</name>
</gene>
<organism>
    <name type="scientific">Drosophila melanogaster</name>
    <name type="common">Fruit fly</name>
    <dbReference type="NCBI Taxonomy" id="7227"/>
    <lineage>
        <taxon>Eukaryota</taxon>
        <taxon>Metazoa</taxon>
        <taxon>Ecdysozoa</taxon>
        <taxon>Arthropoda</taxon>
        <taxon>Hexapoda</taxon>
        <taxon>Insecta</taxon>
        <taxon>Pterygota</taxon>
        <taxon>Neoptera</taxon>
        <taxon>Endopterygota</taxon>
        <taxon>Diptera</taxon>
        <taxon>Brachycera</taxon>
        <taxon>Muscomorpha</taxon>
        <taxon>Ephydroidea</taxon>
        <taxon>Drosophilidae</taxon>
        <taxon>Drosophila</taxon>
        <taxon>Sophophora</taxon>
    </lineage>
</organism>
<feature type="chain" id="PRO_0000107823" description="Transcription factor collier">
    <location>
        <begin position="1"/>
        <end position="575"/>
    </location>
</feature>
<feature type="domain" description="IPT/TIG">
    <location>
        <begin position="299"/>
        <end position="382"/>
    </location>
</feature>
<feature type="zinc finger region" description="C5-type" evidence="2">
    <location>
        <begin position="167"/>
        <end position="186"/>
    </location>
</feature>
<feature type="region of interest" description="Interaction with DNA" evidence="1">
    <location>
        <begin position="79"/>
        <end position="82"/>
    </location>
</feature>
<feature type="region of interest" description="Interaction with DNA" evidence="1">
    <location>
        <begin position="213"/>
        <end position="220"/>
    </location>
</feature>
<feature type="region of interest" description="Interaction with DNA" evidence="1">
    <location>
        <begin position="252"/>
        <end position="255"/>
    </location>
</feature>
<feature type="region of interest" description="Disordered" evidence="3">
    <location>
        <begin position="255"/>
        <end position="278"/>
    </location>
</feature>
<feature type="region of interest" description="Disordered" evidence="3">
    <location>
        <begin position="456"/>
        <end position="492"/>
    </location>
</feature>
<feature type="region of interest" description="Disordered" evidence="3">
    <location>
        <begin position="546"/>
        <end position="575"/>
    </location>
</feature>
<feature type="compositionally biased region" description="Polar residues" evidence="3">
    <location>
        <begin position="266"/>
        <end position="276"/>
    </location>
</feature>
<feature type="compositionally biased region" description="Low complexity" evidence="3">
    <location>
        <begin position="479"/>
        <end position="492"/>
    </location>
</feature>
<feature type="compositionally biased region" description="Basic residues" evidence="3">
    <location>
        <begin position="546"/>
        <end position="557"/>
    </location>
</feature>
<feature type="compositionally biased region" description="Low complexity" evidence="3">
    <location>
        <begin position="561"/>
        <end position="575"/>
    </location>
</feature>
<feature type="site" description="Interaction with DNA" evidence="1">
    <location>
        <position position="179"/>
    </location>
</feature>
<feature type="site" description="Interaction with DNA" evidence="1">
    <location>
        <position position="188"/>
    </location>
</feature>
<feature type="splice variant" id="VSP_001111" description="In isoform COL2." evidence="8">
    <original>MSAVSSTWHQAFVQHHHAATAHPHHHYPHPHQPWHNPAVSAATAAAV</original>
    <variation>RVSSLSFNPFALPTCNTQGYSTQLVTSTK</variation>
    <location>
        <begin position="529"/>
        <end position="575"/>
    </location>
</feature>
<feature type="sequence conflict" description="In Ref. 1; X97803." evidence="9" ref="1">
    <original>RH</original>
    <variation>SD</variation>
    <location>
        <begin position="354"/>
        <end position="355"/>
    </location>
</feature>
<feature type="sequence conflict" description="In Ref. 4; AAM50962." evidence="9" ref="4">
    <original>P</original>
    <variation>R</variation>
    <location>
        <position position="357"/>
    </location>
</feature>
<feature type="sequence conflict" description="In Ref. 4; AAM50962." evidence="9" ref="4">
    <location>
        <position position="384"/>
    </location>
</feature>
<feature type="sequence conflict" description="In Ref. 1; X97803." evidence="9" ref="1">
    <original>G</original>
    <variation>D</variation>
    <location>
        <position position="435"/>
    </location>
</feature>
<dbReference type="EMBL" id="X97803">
    <property type="status" value="NOT_ANNOTATED_CDS"/>
    <property type="molecule type" value="mRNA"/>
</dbReference>
<dbReference type="EMBL" id="AE013599">
    <property type="protein sequence ID" value="AAF58204.2"/>
    <property type="molecule type" value="Genomic_DNA"/>
</dbReference>
<dbReference type="EMBL" id="AY119102">
    <property type="protein sequence ID" value="AAM50962.1"/>
    <property type="molecule type" value="mRNA"/>
</dbReference>
<dbReference type="RefSeq" id="NP_524813.2">
    <molecule id="P56721-2"/>
    <property type="nucleotide sequence ID" value="NM_080074.4"/>
</dbReference>
<dbReference type="RefSeq" id="NP_725419.2">
    <molecule id="P56721-1"/>
    <property type="nucleotide sequence ID" value="NM_166070.3"/>
</dbReference>
<dbReference type="SMR" id="P56721"/>
<dbReference type="BioGRID" id="69588">
    <property type="interactions" value="77"/>
</dbReference>
<dbReference type="FunCoup" id="P56721">
    <property type="interactions" value="135"/>
</dbReference>
<dbReference type="IntAct" id="P56721">
    <property type="interactions" value="22"/>
</dbReference>
<dbReference type="STRING" id="7227.FBpp0111722"/>
<dbReference type="PaxDb" id="7227-FBpp0111722"/>
<dbReference type="EnsemblMetazoa" id="FBtr0087465">
    <molecule id="P56721-2"/>
    <property type="protein sequence ID" value="FBpp0086595"/>
    <property type="gene ID" value="FBgn0001319"/>
</dbReference>
<dbReference type="EnsemblMetazoa" id="FBtr0112809">
    <molecule id="P56721-1"/>
    <property type="protein sequence ID" value="FBpp0111721"/>
    <property type="gene ID" value="FBgn0001319"/>
</dbReference>
<dbReference type="GeneID" id="45318"/>
<dbReference type="KEGG" id="dme:Dmel_CG10197"/>
<dbReference type="UCSC" id="CG10197-RA">
    <molecule id="P56721-1"/>
    <property type="organism name" value="d. melanogaster"/>
</dbReference>
<dbReference type="AGR" id="FB:FBgn0001319"/>
<dbReference type="CTD" id="45318"/>
<dbReference type="FlyBase" id="FBgn0001319">
    <property type="gene designation" value="kn"/>
</dbReference>
<dbReference type="VEuPathDB" id="VectorBase:FBgn0001319"/>
<dbReference type="eggNOG" id="KOG3836">
    <property type="taxonomic scope" value="Eukaryota"/>
</dbReference>
<dbReference type="GeneTree" id="ENSGT00950000182859"/>
<dbReference type="HOGENOM" id="CLU_016320_3_1_1"/>
<dbReference type="InParanoid" id="P56721"/>
<dbReference type="OrthoDB" id="25246at2759"/>
<dbReference type="PhylomeDB" id="P56721"/>
<dbReference type="SignaLink" id="P56721"/>
<dbReference type="BioGRID-ORCS" id="45318">
    <property type="hits" value="0 hits in 3 CRISPR screens"/>
</dbReference>
<dbReference type="GenomeRNAi" id="45318"/>
<dbReference type="PRO" id="PR:P56721"/>
<dbReference type="Proteomes" id="UP000000803">
    <property type="component" value="Chromosome 2R"/>
</dbReference>
<dbReference type="Bgee" id="FBgn0001319">
    <property type="expression patterns" value="Expressed in transmedullary Y neuron TmY5a (Drosophila) in insect head and 89 other cell types or tissues"/>
</dbReference>
<dbReference type="ExpressionAtlas" id="P56721">
    <property type="expression patterns" value="baseline and differential"/>
</dbReference>
<dbReference type="GO" id="GO:0005634">
    <property type="term" value="C:nucleus"/>
    <property type="evidence" value="ECO:0007669"/>
    <property type="project" value="UniProtKB-SubCell"/>
</dbReference>
<dbReference type="GO" id="GO:0000981">
    <property type="term" value="F:DNA-binding transcription factor activity, RNA polymerase II-specific"/>
    <property type="evidence" value="ECO:0000318"/>
    <property type="project" value="GO_Central"/>
</dbReference>
<dbReference type="GO" id="GO:0000978">
    <property type="term" value="F:RNA polymerase II cis-regulatory region sequence-specific DNA binding"/>
    <property type="evidence" value="ECO:0000318"/>
    <property type="project" value="GO_Central"/>
</dbReference>
<dbReference type="GO" id="GO:0008270">
    <property type="term" value="F:zinc ion binding"/>
    <property type="evidence" value="ECO:0007669"/>
    <property type="project" value="UniProtKB-KW"/>
</dbReference>
<dbReference type="GO" id="GO:0035288">
    <property type="term" value="P:anterior head segmentation"/>
    <property type="evidence" value="ECO:0000304"/>
    <property type="project" value="FlyBase"/>
</dbReference>
<dbReference type="GO" id="GO:0007350">
    <property type="term" value="P:blastoderm segmentation"/>
    <property type="evidence" value="ECO:0000304"/>
    <property type="project" value="FlyBase"/>
</dbReference>
<dbReference type="GO" id="GO:0048813">
    <property type="term" value="P:dendrite morphogenesis"/>
    <property type="evidence" value="ECO:0000315"/>
    <property type="project" value="FlyBase"/>
</dbReference>
<dbReference type="GO" id="GO:0016204">
    <property type="term" value="P:determination of muscle attachment site"/>
    <property type="evidence" value="ECO:0000315"/>
    <property type="project" value="FlyBase"/>
</dbReference>
<dbReference type="GO" id="GO:0001700">
    <property type="term" value="P:embryonic development via the syncytial blastoderm"/>
    <property type="evidence" value="ECO:0000315"/>
    <property type="project" value="FlyBase"/>
</dbReference>
<dbReference type="GO" id="GO:0035287">
    <property type="term" value="P:head segmentation"/>
    <property type="evidence" value="ECO:0000315"/>
    <property type="project" value="FlyBase"/>
</dbReference>
<dbReference type="GO" id="GO:0007476">
    <property type="term" value="P:imaginal disc-derived wing morphogenesis"/>
    <property type="evidence" value="ECO:0000304"/>
    <property type="project" value="FlyBase"/>
</dbReference>
<dbReference type="GO" id="GO:0007474">
    <property type="term" value="P:imaginal disc-derived wing vein specification"/>
    <property type="evidence" value="ECO:0000315"/>
    <property type="project" value="FlyBase"/>
</dbReference>
<dbReference type="GO" id="GO:0045087">
    <property type="term" value="P:innate immune response"/>
    <property type="evidence" value="ECO:0000315"/>
    <property type="project" value="FlyBase"/>
</dbReference>
<dbReference type="GO" id="GO:0007526">
    <property type="term" value="P:larval somatic muscle development"/>
    <property type="evidence" value="ECO:0000315"/>
    <property type="project" value="FlyBase"/>
</dbReference>
<dbReference type="GO" id="GO:0042694">
    <property type="term" value="P:muscle cell fate specification"/>
    <property type="evidence" value="ECO:0000315"/>
    <property type="project" value="FlyBase"/>
</dbReference>
<dbReference type="GO" id="GO:0045944">
    <property type="term" value="P:positive regulation of transcription by RNA polymerase II"/>
    <property type="evidence" value="ECO:0000315"/>
    <property type="project" value="FlyBase"/>
</dbReference>
<dbReference type="GO" id="GO:0035289">
    <property type="term" value="P:posterior head segmentation"/>
    <property type="evidence" value="ECO:0000304"/>
    <property type="project" value="FlyBase"/>
</dbReference>
<dbReference type="GO" id="GO:0048814">
    <property type="term" value="P:regulation of dendrite morphogenesis"/>
    <property type="evidence" value="ECO:0000315"/>
    <property type="project" value="FlyBase"/>
</dbReference>
<dbReference type="GO" id="GO:0006355">
    <property type="term" value="P:regulation of DNA-templated transcription"/>
    <property type="evidence" value="ECO:0000315"/>
    <property type="project" value="FlyBase"/>
</dbReference>
<dbReference type="GO" id="GO:0010468">
    <property type="term" value="P:regulation of gene expression"/>
    <property type="evidence" value="ECO:0000314"/>
    <property type="project" value="FlyBase"/>
</dbReference>
<dbReference type="GO" id="GO:0035203">
    <property type="term" value="P:regulation of lamellocyte differentiation"/>
    <property type="evidence" value="ECO:0000315"/>
    <property type="project" value="FlyBase"/>
</dbReference>
<dbReference type="GO" id="GO:0006357">
    <property type="term" value="P:regulation of transcription by RNA polymerase II"/>
    <property type="evidence" value="ECO:0000318"/>
    <property type="project" value="GO_Central"/>
</dbReference>
<dbReference type="GO" id="GO:0009608">
    <property type="term" value="P:response to symbiont"/>
    <property type="evidence" value="ECO:0000315"/>
    <property type="project" value="FlyBase"/>
</dbReference>
<dbReference type="GO" id="GO:0007367">
    <property type="term" value="P:segment polarity determination"/>
    <property type="evidence" value="ECO:0000314"/>
    <property type="project" value="FlyBase"/>
</dbReference>
<dbReference type="GO" id="GO:0035291">
    <property type="term" value="P:specification of segmental identity, intercalary segment"/>
    <property type="evidence" value="ECO:0000315"/>
    <property type="project" value="FlyBase"/>
</dbReference>
<dbReference type="GO" id="GO:0007419">
    <property type="term" value="P:ventral cord development"/>
    <property type="evidence" value="ECO:0007001"/>
    <property type="project" value="FlyBase"/>
</dbReference>
<dbReference type="CDD" id="cd11606">
    <property type="entry name" value="COE_DBD"/>
    <property type="match status" value="1"/>
</dbReference>
<dbReference type="CDD" id="cd01175">
    <property type="entry name" value="IPT_COE"/>
    <property type="match status" value="1"/>
</dbReference>
<dbReference type="FunFam" id="2.60.40.3180:FF:000003">
    <property type="entry name" value="Knot, isoform C"/>
    <property type="match status" value="1"/>
</dbReference>
<dbReference type="FunFam" id="1.10.287.4280:FF:000001">
    <property type="entry name" value="transcription factor COE1 isoform X2"/>
    <property type="match status" value="1"/>
</dbReference>
<dbReference type="FunFam" id="2.60.40.10:FF:000762">
    <property type="entry name" value="transcription factor collier isoform X4"/>
    <property type="match status" value="1"/>
</dbReference>
<dbReference type="Gene3D" id="1.10.287.4280">
    <property type="match status" value="1"/>
</dbReference>
<dbReference type="Gene3D" id="2.60.40.10">
    <property type="entry name" value="Immunoglobulins"/>
    <property type="match status" value="1"/>
</dbReference>
<dbReference type="Gene3D" id="2.60.40.3180">
    <property type="entry name" value="Transcription factor COE1, DNA-binding domain"/>
    <property type="match status" value="1"/>
</dbReference>
<dbReference type="InterPro" id="IPR032200">
    <property type="entry name" value="COE_DBD"/>
</dbReference>
<dbReference type="InterPro" id="IPR038173">
    <property type="entry name" value="COE_DBD_sf"/>
</dbReference>
<dbReference type="InterPro" id="IPR032201">
    <property type="entry name" value="COE_HLH"/>
</dbReference>
<dbReference type="InterPro" id="IPR038006">
    <property type="entry name" value="COE_IPT"/>
</dbReference>
<dbReference type="InterPro" id="IPR013783">
    <property type="entry name" value="Ig-like_fold"/>
</dbReference>
<dbReference type="InterPro" id="IPR014756">
    <property type="entry name" value="Ig_E-set"/>
</dbReference>
<dbReference type="InterPro" id="IPR002909">
    <property type="entry name" value="IPT_dom"/>
</dbReference>
<dbReference type="InterPro" id="IPR003523">
    <property type="entry name" value="Transcription_factor_COE"/>
</dbReference>
<dbReference type="InterPro" id="IPR018350">
    <property type="entry name" value="Transcription_factor_COE_CS"/>
</dbReference>
<dbReference type="PANTHER" id="PTHR10747">
    <property type="entry name" value="TRANSCRIPTION FACTOR COE FAMILY MEMBER"/>
    <property type="match status" value="1"/>
</dbReference>
<dbReference type="Pfam" id="PF16422">
    <property type="entry name" value="COE1_DBD"/>
    <property type="match status" value="1"/>
</dbReference>
<dbReference type="Pfam" id="PF16423">
    <property type="entry name" value="COE1_HLH"/>
    <property type="match status" value="1"/>
</dbReference>
<dbReference type="Pfam" id="PF01833">
    <property type="entry name" value="TIG"/>
    <property type="match status" value="1"/>
</dbReference>
<dbReference type="SMART" id="SM00429">
    <property type="entry name" value="IPT"/>
    <property type="match status" value="1"/>
</dbReference>
<dbReference type="SUPFAM" id="SSF81296">
    <property type="entry name" value="E set domains"/>
    <property type="match status" value="1"/>
</dbReference>
<dbReference type="PROSITE" id="PS01345">
    <property type="entry name" value="COE"/>
    <property type="match status" value="1"/>
</dbReference>
<sequence>MEWGRKLYPSAVSGPRSAGGLMFGLPPTAAVDMNQPRGPMTSLKEEPLGSRWAMQPVVDQSNLGIGRAHFEKQPPSNLRKSNFFHFVIALYDRAGQPIEIERTAFIGFIEKDSESDATKTNNGIQYRLQLLYANGARQEQDIFVRLIDSVTKQAIIYEGQDKNPEMCRVLLTHEVMCSRCCDKKSCGNRNETPSDPVIIDRFFLKFFLKCNQNCLKNAGNPRDMRRFQVVISTQVAVDGPLLAISDNMFVHNNSKHGRRAKRLDTTEGTGNTSLSISGHPLAPDSTYDGLYPPLPVATPCIKAISPSEGWTTGGATVIIVGDNFFDGLQVVFGTMLVWSELITSHAIRVQTPPRHIPGVVEVTLSYKSKQFCKGSPGRFVYVSALNEPTIDYGFQRLQKLIPRHPGDPEKLQKEIILKRAADLVEALYSMPRSPGGSTGFNSYAGQLAVSVQDGSGQWTEDDYQRAQSSSVSPRGGYCSSASTPHSSGGSYGATAASAAVAATANGYAPAPNMGTLSSSPGSVFNSTSMSAVSSTWHQAFVQHHHAATAHPHHHYPHPHQPWHNPAVSAATAAAV</sequence>
<name>COLL_DROME</name>
<evidence type="ECO:0000250" key="1"/>
<evidence type="ECO:0000255" key="2"/>
<evidence type="ECO:0000256" key="3">
    <source>
        <dbReference type="SAM" id="MobiDB-lite"/>
    </source>
</evidence>
<evidence type="ECO:0000269" key="4">
    <source>
    </source>
</evidence>
<evidence type="ECO:0000269" key="5">
    <source>
    </source>
</evidence>
<evidence type="ECO:0000269" key="6">
    <source>
    </source>
</evidence>
<evidence type="ECO:0000269" key="7">
    <source>
    </source>
</evidence>
<evidence type="ECO:0000303" key="8">
    <source>
    </source>
</evidence>
<evidence type="ECO:0000305" key="9"/>